<dbReference type="EMBL" id="X75304">
    <property type="protein sequence ID" value="CAA53052.1"/>
    <property type="molecule type" value="mRNA"/>
</dbReference>
<dbReference type="EMBL" id="D25542">
    <property type="protein sequence ID" value="BAA05025.1"/>
    <property type="molecule type" value="mRNA"/>
</dbReference>
<dbReference type="EMBL" id="AB371588">
    <property type="protein sequence ID" value="BAG48317.1"/>
    <property type="molecule type" value="mRNA"/>
</dbReference>
<dbReference type="EMBL" id="AB593126">
    <property type="protein sequence ID" value="BAJ84066.1"/>
    <property type="molecule type" value="mRNA"/>
</dbReference>
<dbReference type="EMBL" id="AC119736">
    <property type="status" value="NOT_ANNOTATED_CDS"/>
    <property type="molecule type" value="Genomic_DNA"/>
</dbReference>
<dbReference type="EMBL" id="AC133750">
    <property type="status" value="NOT_ANNOTATED_CDS"/>
    <property type="molecule type" value="Genomic_DNA"/>
</dbReference>
<dbReference type="EMBL" id="CH471052">
    <property type="protein sequence ID" value="EAW79502.1"/>
    <property type="molecule type" value="Genomic_DNA"/>
</dbReference>
<dbReference type="EMBL" id="CH471052">
    <property type="protein sequence ID" value="EAW79504.1"/>
    <property type="molecule type" value="Genomic_DNA"/>
</dbReference>
<dbReference type="CCDS" id="CCDS3004.1">
    <molecule id="Q14789-1"/>
</dbReference>
<dbReference type="CCDS" id="CCDS58847.1">
    <molecule id="Q14789-2"/>
</dbReference>
<dbReference type="PIR" id="A56539">
    <property type="entry name" value="A56539"/>
</dbReference>
<dbReference type="PIR" id="I52300">
    <property type="entry name" value="I52300"/>
</dbReference>
<dbReference type="RefSeq" id="NP_001243415.1">
    <molecule id="Q14789-2"/>
    <property type="nucleotide sequence ID" value="NM_001256486.2"/>
</dbReference>
<dbReference type="RefSeq" id="NP_001243416.1">
    <molecule id="Q14789-3"/>
    <property type="nucleotide sequence ID" value="NM_001256487.2"/>
</dbReference>
<dbReference type="RefSeq" id="NP_001243417.1">
    <molecule id="Q14789-4"/>
    <property type="nucleotide sequence ID" value="NM_001256488.2"/>
</dbReference>
<dbReference type="RefSeq" id="NP_004478.3">
    <molecule id="Q14789-1"/>
    <property type="nucleotide sequence ID" value="NM_004487.5"/>
</dbReference>
<dbReference type="RefSeq" id="XP_005247428.1">
    <molecule id="Q14789-2"/>
    <property type="nucleotide sequence ID" value="XM_005247371.5"/>
</dbReference>
<dbReference type="RefSeq" id="XP_011511001.1">
    <molecule id="Q14789-2"/>
    <property type="nucleotide sequence ID" value="XM_011512699.4"/>
</dbReference>
<dbReference type="SMR" id="Q14789"/>
<dbReference type="BioGRID" id="109066">
    <property type="interactions" value="221"/>
</dbReference>
<dbReference type="DIP" id="DIP-34649N"/>
<dbReference type="FunCoup" id="Q14789">
    <property type="interactions" value="2562"/>
</dbReference>
<dbReference type="IntAct" id="Q14789">
    <property type="interactions" value="81"/>
</dbReference>
<dbReference type="MINT" id="Q14789"/>
<dbReference type="STRING" id="9606.ENSP00000377275"/>
<dbReference type="CarbonylDB" id="Q14789"/>
<dbReference type="GlyGen" id="Q14789">
    <property type="glycosylation" value="3 sites, 1 O-linked glycan (2 sites)"/>
</dbReference>
<dbReference type="iPTMnet" id="Q14789"/>
<dbReference type="MetOSite" id="Q14789"/>
<dbReference type="PhosphoSitePlus" id="Q14789"/>
<dbReference type="SwissPalm" id="Q14789"/>
<dbReference type="BioMuta" id="GOLGB1"/>
<dbReference type="DMDM" id="145559478"/>
<dbReference type="jPOST" id="Q14789"/>
<dbReference type="MassIVE" id="Q14789"/>
<dbReference type="PaxDb" id="9606-ENSP00000377275"/>
<dbReference type="PeptideAtlas" id="Q14789"/>
<dbReference type="ProteomicsDB" id="17296"/>
<dbReference type="ProteomicsDB" id="60171">
    <molecule id="Q14789-1"/>
</dbReference>
<dbReference type="Pumba" id="Q14789"/>
<dbReference type="ABCD" id="Q14789">
    <property type="antibodies" value="1 sequenced antibody"/>
</dbReference>
<dbReference type="Antibodypedia" id="2615">
    <property type="antibodies" value="155 antibodies from 31 providers"/>
</dbReference>
<dbReference type="DNASU" id="2804"/>
<dbReference type="Ensembl" id="ENST00000340645.10">
    <molecule id="Q14789-1"/>
    <property type="protein sequence ID" value="ENSP00000341848.5"/>
    <property type="gene ID" value="ENSG00000173230.17"/>
</dbReference>
<dbReference type="Ensembl" id="ENST00000393667.8">
    <molecule id="Q14789-2"/>
    <property type="protein sequence ID" value="ENSP00000377275.3"/>
    <property type="gene ID" value="ENSG00000173230.17"/>
</dbReference>
<dbReference type="GeneID" id="2804"/>
<dbReference type="KEGG" id="hsa:2804"/>
<dbReference type="UCSC" id="uc003eei.6">
    <molecule id="Q14789-1"/>
    <property type="organism name" value="human"/>
</dbReference>
<dbReference type="UCSC" id="uc021xcy.3">
    <property type="organism name" value="human"/>
</dbReference>
<dbReference type="AGR" id="HGNC:4429"/>
<dbReference type="CTD" id="2804"/>
<dbReference type="DisGeNET" id="2804"/>
<dbReference type="GeneCards" id="GOLGB1"/>
<dbReference type="HGNC" id="HGNC:4429">
    <property type="gene designation" value="GOLGB1"/>
</dbReference>
<dbReference type="HPA" id="ENSG00000173230">
    <property type="expression patterns" value="Low tissue specificity"/>
</dbReference>
<dbReference type="MIM" id="602500">
    <property type="type" value="gene"/>
</dbReference>
<dbReference type="neXtProt" id="NX_Q14789"/>
<dbReference type="OpenTargets" id="ENSG00000173230"/>
<dbReference type="PharmGKB" id="PA28810"/>
<dbReference type="VEuPathDB" id="HostDB:ENSG00000173230"/>
<dbReference type="eggNOG" id="ENOG502QQZT">
    <property type="taxonomic scope" value="Eukaryota"/>
</dbReference>
<dbReference type="GeneTree" id="ENSGT00730000111007"/>
<dbReference type="HOGENOM" id="CLU_000379_0_0_1"/>
<dbReference type="InParanoid" id="Q14789"/>
<dbReference type="OMA" id="YMAIDAF"/>
<dbReference type="OrthoDB" id="9904168at2759"/>
<dbReference type="PAN-GO" id="Q14789">
    <property type="GO annotations" value="2 GO annotations based on evolutionary models"/>
</dbReference>
<dbReference type="PhylomeDB" id="Q14789"/>
<dbReference type="TreeFam" id="TF325082"/>
<dbReference type="PathwayCommons" id="Q14789"/>
<dbReference type="Reactome" id="R-HSA-432722">
    <property type="pathway name" value="Golgi Associated Vesicle Biogenesis"/>
</dbReference>
<dbReference type="Reactome" id="R-HSA-6807878">
    <property type="pathway name" value="COPI-mediated anterograde transport"/>
</dbReference>
<dbReference type="Reactome" id="R-HSA-9703465">
    <property type="pathway name" value="Signaling by FLT3 fusion proteins"/>
</dbReference>
<dbReference type="SignaLink" id="Q14789"/>
<dbReference type="SIGNOR" id="Q14789"/>
<dbReference type="BioGRID-ORCS" id="2804">
    <property type="hits" value="13 hits in 1168 CRISPR screens"/>
</dbReference>
<dbReference type="CD-CODE" id="8C2F96ED">
    <property type="entry name" value="Centrosome"/>
</dbReference>
<dbReference type="CD-CODE" id="FB4E32DD">
    <property type="entry name" value="Presynaptic clusters and postsynaptic densities"/>
</dbReference>
<dbReference type="ChiTaRS" id="GOLGB1">
    <property type="organism name" value="human"/>
</dbReference>
<dbReference type="GeneWiki" id="GOLGB1"/>
<dbReference type="GenomeRNAi" id="2804"/>
<dbReference type="Pharos" id="Q14789">
    <property type="development level" value="Tbio"/>
</dbReference>
<dbReference type="PRO" id="PR:Q14789"/>
<dbReference type="Proteomes" id="UP000005640">
    <property type="component" value="Chromosome 3"/>
</dbReference>
<dbReference type="RNAct" id="Q14789">
    <property type="molecule type" value="protein"/>
</dbReference>
<dbReference type="Bgee" id="ENSG00000173230">
    <property type="expression patterns" value="Expressed in calcaneal tendon and 201 other cell types or tissues"/>
</dbReference>
<dbReference type="ExpressionAtlas" id="Q14789">
    <property type="expression patterns" value="baseline and differential"/>
</dbReference>
<dbReference type="GO" id="GO:0005801">
    <property type="term" value="C:cis-Golgi network"/>
    <property type="evidence" value="ECO:0000318"/>
    <property type="project" value="GO_Central"/>
</dbReference>
<dbReference type="GO" id="GO:0005829">
    <property type="term" value="C:cytosol"/>
    <property type="evidence" value="ECO:0000304"/>
    <property type="project" value="Reactome"/>
</dbReference>
<dbReference type="GO" id="GO:0005793">
    <property type="term" value="C:endoplasmic reticulum-Golgi intermediate compartment"/>
    <property type="evidence" value="ECO:0000314"/>
    <property type="project" value="UniProtKB"/>
</dbReference>
<dbReference type="GO" id="GO:0005794">
    <property type="term" value="C:Golgi apparatus"/>
    <property type="evidence" value="ECO:0000314"/>
    <property type="project" value="HPA"/>
</dbReference>
<dbReference type="GO" id="GO:0000139">
    <property type="term" value="C:Golgi membrane"/>
    <property type="evidence" value="ECO:0000304"/>
    <property type="project" value="Reactome"/>
</dbReference>
<dbReference type="GO" id="GO:0005795">
    <property type="term" value="C:Golgi stack"/>
    <property type="evidence" value="ECO:0000304"/>
    <property type="project" value="ProtInc"/>
</dbReference>
<dbReference type="GO" id="GO:0016020">
    <property type="term" value="C:membrane"/>
    <property type="evidence" value="ECO:0007005"/>
    <property type="project" value="UniProtKB"/>
</dbReference>
<dbReference type="GO" id="GO:0003723">
    <property type="term" value="F:RNA binding"/>
    <property type="evidence" value="ECO:0007005"/>
    <property type="project" value="UniProtKB"/>
</dbReference>
<dbReference type="GO" id="GO:0043565">
    <property type="term" value="F:sequence-specific DNA binding"/>
    <property type="evidence" value="ECO:0007669"/>
    <property type="project" value="InterPro"/>
</dbReference>
<dbReference type="GO" id="GO:0007030">
    <property type="term" value="P:Golgi organization"/>
    <property type="evidence" value="ECO:0000304"/>
    <property type="project" value="ProtInc"/>
</dbReference>
<dbReference type="GO" id="GO:1905793">
    <property type="term" value="P:protein localization to pericentriolar material"/>
    <property type="evidence" value="ECO:0000315"/>
    <property type="project" value="GO_Central"/>
</dbReference>
<dbReference type="GO" id="GO:0006355">
    <property type="term" value="P:regulation of DNA-templated transcription"/>
    <property type="evidence" value="ECO:0007669"/>
    <property type="project" value="InterPro"/>
</dbReference>
<dbReference type="Gene3D" id="1.10.287.1490">
    <property type="match status" value="1"/>
</dbReference>
<dbReference type="InterPro" id="IPR026202">
    <property type="entry name" value="GOLGB1"/>
</dbReference>
<dbReference type="InterPro" id="IPR003106">
    <property type="entry name" value="Leu_zip_homeo"/>
</dbReference>
<dbReference type="PANTHER" id="PTHR18887">
    <property type="entry name" value="GOLGI-ASSOCIATED PROTEIN GCP360-RELATED"/>
    <property type="match status" value="1"/>
</dbReference>
<dbReference type="PANTHER" id="PTHR18887:SF2">
    <property type="entry name" value="GOLGIN SUBFAMILY B MEMBER 1"/>
    <property type="match status" value="1"/>
</dbReference>
<dbReference type="SMART" id="SM00340">
    <property type="entry name" value="HALZ"/>
    <property type="match status" value="4"/>
</dbReference>
<keyword id="KW-0007">Acetylation</keyword>
<keyword id="KW-0025">Alternative splicing</keyword>
<keyword id="KW-0175">Coiled coil</keyword>
<keyword id="KW-1015">Disulfide bond</keyword>
<keyword id="KW-0333">Golgi apparatus</keyword>
<keyword id="KW-0472">Membrane</keyword>
<keyword id="KW-0597">Phosphoprotein</keyword>
<keyword id="KW-1267">Proteomics identification</keyword>
<keyword id="KW-1185">Reference proteome</keyword>
<keyword id="KW-0812">Transmembrane</keyword>
<keyword id="KW-1133">Transmembrane helix</keyword>
<protein>
    <recommendedName>
        <fullName>Golgin subfamily B member 1</fullName>
    </recommendedName>
    <alternativeName>
        <fullName>372 kDa Golgi complex-associated protein</fullName>
        <shortName>GCP372</shortName>
    </alternativeName>
    <alternativeName>
        <fullName>Giantin</fullName>
    </alternativeName>
    <alternativeName>
        <fullName>Macrogolgin</fullName>
    </alternativeName>
</protein>
<organism>
    <name type="scientific">Homo sapiens</name>
    <name type="common">Human</name>
    <dbReference type="NCBI Taxonomy" id="9606"/>
    <lineage>
        <taxon>Eukaryota</taxon>
        <taxon>Metazoa</taxon>
        <taxon>Chordata</taxon>
        <taxon>Craniata</taxon>
        <taxon>Vertebrata</taxon>
        <taxon>Euteleostomi</taxon>
        <taxon>Mammalia</taxon>
        <taxon>Eutheria</taxon>
        <taxon>Euarchontoglires</taxon>
        <taxon>Primates</taxon>
        <taxon>Haplorrhini</taxon>
        <taxon>Catarrhini</taxon>
        <taxon>Hominidae</taxon>
        <taxon>Homo</taxon>
    </lineage>
</organism>
<gene>
    <name type="primary">GOLGB1</name>
</gene>
<feature type="chain" id="PRO_0000190071" description="Golgin subfamily B member 1">
    <location>
        <begin position="1"/>
        <end position="3259"/>
    </location>
</feature>
<feature type="topological domain" description="Cytoplasmic" evidence="1">
    <location>
        <begin position="1"/>
        <end position="3235"/>
    </location>
</feature>
<feature type="transmembrane region" description="Helical" evidence="1">
    <location>
        <begin position="3236"/>
        <end position="3256"/>
    </location>
</feature>
<feature type="topological domain" description="Lumenal" evidence="1">
    <location>
        <begin position="3257"/>
        <end position="3259"/>
    </location>
</feature>
<feature type="region of interest" description="Disordered" evidence="2">
    <location>
        <begin position="119"/>
        <end position="142"/>
    </location>
</feature>
<feature type="region of interest" description="Disordered" evidence="2">
    <location>
        <begin position="624"/>
        <end position="652"/>
    </location>
</feature>
<feature type="region of interest" description="Disordered" evidence="2">
    <location>
        <begin position="944"/>
        <end position="963"/>
    </location>
</feature>
<feature type="region of interest" description="Disordered" evidence="2">
    <location>
        <begin position="1747"/>
        <end position="1829"/>
    </location>
</feature>
<feature type="region of interest" description="Disordered" evidence="2">
    <location>
        <begin position="2856"/>
        <end position="2876"/>
    </location>
</feature>
<feature type="region of interest" description="Disordered" evidence="2">
    <location>
        <begin position="2998"/>
        <end position="3021"/>
    </location>
</feature>
<feature type="region of interest" description="Disordered" evidence="2">
    <location>
        <begin position="3107"/>
        <end position="3140"/>
    </location>
</feature>
<feature type="coiled-coil region" evidence="1">
    <location>
        <begin position="48"/>
        <end position="593"/>
    </location>
</feature>
<feature type="coiled-coil region" evidence="1">
    <location>
        <begin position="677"/>
        <end position="1028"/>
    </location>
</feature>
<feature type="coiled-coil region" evidence="1">
    <location>
        <begin position="1062"/>
        <end position="1245"/>
    </location>
</feature>
<feature type="coiled-coil region" evidence="1">
    <location>
        <begin position="1301"/>
        <end position="1779"/>
    </location>
</feature>
<feature type="coiled-coil region" evidence="1">
    <location>
        <begin position="1828"/>
        <end position="3185"/>
    </location>
</feature>
<feature type="compositionally biased region" description="Basic and acidic residues" evidence="2">
    <location>
        <begin position="131"/>
        <end position="142"/>
    </location>
</feature>
<feature type="compositionally biased region" description="Basic and acidic residues" evidence="2">
    <location>
        <begin position="635"/>
        <end position="650"/>
    </location>
</feature>
<feature type="compositionally biased region" description="Basic and acidic residues" evidence="2">
    <location>
        <begin position="1747"/>
        <end position="1763"/>
    </location>
</feature>
<feature type="compositionally biased region" description="Polar residues" evidence="2">
    <location>
        <begin position="1782"/>
        <end position="1794"/>
    </location>
</feature>
<feature type="compositionally biased region" description="Polar residues" evidence="2">
    <location>
        <begin position="1802"/>
        <end position="1820"/>
    </location>
</feature>
<feature type="compositionally biased region" description="Polar residues" evidence="2">
    <location>
        <begin position="2865"/>
        <end position="2875"/>
    </location>
</feature>
<feature type="compositionally biased region" description="Basic and acidic residues" evidence="2">
    <location>
        <begin position="3118"/>
        <end position="3131"/>
    </location>
</feature>
<feature type="modified residue" description="Phosphoserine" evidence="12 16">
    <location>
        <position position="6"/>
    </location>
</feature>
<feature type="modified residue" description="Phosphoserine" evidence="11 12 13">
    <location>
        <position position="17"/>
    </location>
</feature>
<feature type="modified residue" description="Phosphoserine" evidence="13">
    <location>
        <position position="138"/>
    </location>
</feature>
<feature type="modified residue" description="Phosphoserine" evidence="16">
    <location>
        <position position="528"/>
    </location>
</feature>
<feature type="modified residue" description="Phosphoserine" evidence="16">
    <location>
        <position position="653"/>
    </location>
</feature>
<feature type="modified residue" description="Phosphoserine" evidence="16">
    <location>
        <position position="2216"/>
    </location>
</feature>
<feature type="modified residue" description="Phosphoserine" evidence="16">
    <location>
        <position position="2735"/>
    </location>
</feature>
<feature type="modified residue" description="Phosphoserine" evidence="15">
    <location>
        <position position="2872"/>
    </location>
</feature>
<feature type="modified residue" description="Phosphoserine" evidence="16">
    <location>
        <position position="2884"/>
    </location>
</feature>
<feature type="modified residue" description="Phosphoserine" evidence="15">
    <location>
        <position position="3037"/>
    </location>
</feature>
<feature type="splice variant" id="VSP_057417" description="In isoform 3 and isoform 4." evidence="8 9">
    <location>
        <begin position="1"/>
        <end position="39"/>
    </location>
</feature>
<feature type="splice variant" id="VSP_045567" description="In isoform 2 and isoform 3." evidence="7 9">
    <original>A</original>
    <variation>AQLSSM</variation>
    <location>
        <position position="215"/>
    </location>
</feature>
<feature type="splice variant" id="VSP_057418" description="In isoform 4." evidence="8">
    <location>
        <begin position="216"/>
        <end position="251"/>
    </location>
</feature>
<feature type="splice variant" id="VSP_045568" description="In isoform 2." evidence="7">
    <original>A</original>
    <variation>AVSKEK</variation>
    <location>
        <position position="3102"/>
    </location>
</feature>
<feature type="sequence variant" id="VAR_036096" description="In a breast cancer sample; somatic mutation." evidence="4">
    <original>Q</original>
    <variation>H</variation>
    <location>
        <position position="348"/>
    </location>
</feature>
<feature type="sequence variant" id="VAR_020155" description="In dbSNP:rs3732407." evidence="5">
    <original>T</original>
    <variation>S</variation>
    <location>
        <position position="911"/>
    </location>
</feature>
<feature type="sequence variant" id="VAR_036097" description="In a breast cancer sample; somatic mutation." evidence="4">
    <original>A</original>
    <variation>G</variation>
    <location>
        <position position="944"/>
    </location>
</feature>
<feature type="sequence variant" id="VAR_020156" description="In dbSNP:rs3732410." evidence="5">
    <original>Y</original>
    <variation>C</variation>
    <location>
        <position position="1212"/>
    </location>
</feature>
<feature type="sequence variant" id="VAR_031671" description="In dbSNP:rs33988592.">
    <original>P</original>
    <variation>S</variation>
    <location>
        <position position="1249"/>
    </location>
</feature>
<feature type="sequence variant" id="VAR_031672" description="In dbSNP:rs35674179.">
    <original>C</original>
    <variation>F</variation>
    <location>
        <position position="1713"/>
    </location>
</feature>
<feature type="sequence variant" id="VAR_031673" description="In dbSNP:rs1127412." evidence="5 6">
    <original>G</original>
    <variation>D</variation>
    <location>
        <position position="1765"/>
    </location>
</feature>
<feature type="sequence conflict" description="In Ref. 2; BAA05025." evidence="10" ref="2">
    <original>H</original>
    <variation>D</variation>
    <location>
        <position position="2950"/>
    </location>
</feature>
<feature type="modified residue" description="N-acetylmethionine" evidence="14">
    <location sequence="Q14789-3">
        <position position="1"/>
    </location>
</feature>
<feature type="modified residue" description="N-acetylmethionine" evidence="14">
    <location sequence="Q14789-4">
        <position position="1"/>
    </location>
</feature>
<proteinExistence type="evidence at protein level"/>
<name>GOGB1_HUMAN</name>
<comment type="function">
    <text>May participate in forming intercisternal cross-bridges of the Golgi complex.</text>
</comment>
<comment type="subunit">
    <text evidence="3">Homodimer; disulfide-linked. Interacts with PLK3.</text>
</comment>
<comment type="interaction">
    <interactant intactId="EBI-709973">
        <id>Q14789</id>
    </interactant>
    <interactant intactId="EBI-473138">
        <id>P35080</id>
        <label>PFN2</label>
    </interactant>
    <organismsDiffer>false</organismsDiffer>
    <experiments>2</experiments>
</comment>
<comment type="subcellular location">
    <subcellularLocation>
        <location>Golgi apparatus membrane</location>
        <topology>Single-pass type I membrane protein</topology>
    </subcellularLocation>
</comment>
<comment type="alternative products">
    <event type="alternative splicing"/>
    <isoform>
        <id>Q14789-1</id>
        <name>1</name>
        <sequence type="displayed"/>
    </isoform>
    <isoform>
        <id>Q14789-2</id>
        <name>2</name>
        <sequence type="described" ref="VSP_045567 VSP_045568"/>
    </isoform>
    <isoform>
        <id>Q14789-3</id>
        <name>3</name>
        <sequence type="described" ref="VSP_057417 VSP_045567"/>
    </isoform>
    <isoform>
        <id>Q14789-4</id>
        <name>4</name>
        <sequence type="described" ref="VSP_057417 VSP_057418"/>
    </isoform>
</comment>
<comment type="miscellaneous">
    <text>Antigen in chronic rheumatoid arthritis and in the autoimmune disease Sjoegren syndrome.</text>
</comment>
<accession>Q14789</accession>
<accession>B2ZZ91</accession>
<accession>D3DN92</accession>
<accession>E7EP74</accession>
<accession>F1T0J2</accession>
<accession>Q14398</accession>
<evidence type="ECO:0000255" key="1"/>
<evidence type="ECO:0000256" key="2">
    <source>
        <dbReference type="SAM" id="MobiDB-lite"/>
    </source>
</evidence>
<evidence type="ECO:0000269" key="3">
    <source>
    </source>
</evidence>
<evidence type="ECO:0000269" key="4">
    <source>
    </source>
</evidence>
<evidence type="ECO:0000269" key="5">
    <source>
    </source>
</evidence>
<evidence type="ECO:0000269" key="6">
    <source>
    </source>
</evidence>
<evidence type="ECO:0000303" key="7">
    <source>
    </source>
</evidence>
<evidence type="ECO:0000303" key="8">
    <source>
    </source>
</evidence>
<evidence type="ECO:0000303" key="9">
    <source>
    </source>
</evidence>
<evidence type="ECO:0000305" key="10"/>
<evidence type="ECO:0007744" key="11">
    <source>
    </source>
</evidence>
<evidence type="ECO:0007744" key="12">
    <source>
    </source>
</evidence>
<evidence type="ECO:0007744" key="13">
    <source>
    </source>
</evidence>
<evidence type="ECO:0007744" key="14">
    <source>
    </source>
</evidence>
<evidence type="ECO:0007744" key="15">
    <source>
    </source>
</evidence>
<evidence type="ECO:0007744" key="16">
    <source>
    </source>
</evidence>
<sequence>MLSRLSGLANVVLHELSGDDDTDQNMRAPLDPELHQESDMEFNNTTQEDVQERLAYAEQLVVELKDIIRQKDVQLQQKDEALQEERKAADNKIKKLKLHAKAKLTSLNKYIEEMKAQGGTVLPTEPQSEEQLSKHDKSSTEEEMEIEKIKHKLQEKEELISTLQAQLTQAQAEQPAQSSTEMEEFVMMKQQLQEKEEFISTLQAQLSQTQAEQAAQQVVREKDARFETQVRLHEDELLQLVTQADVETEMQQKLRVLQRKLEEHEESLVGRAQVVDLLQQELTAAEQRNQILSQQLQQMEAEHNTLRNTVETEREESKILLEKMELEVAERKLSFHNLQEEMHHLLEQFEQAGQAQAELESRYSALEQKHKAEMEEKTSHILSLQKTGQELQSACDALKDQNSKLLQDKNEQAVQSAQTIQQLEDQLQQKSKEISQFLNRLPLQQHETASQTSFPDVYNEGTQAVTEENIASLQKRVVELENEKGALLLSSIELEELKAENEKLSSQITLLEAQNRTGEADREVSEISIVDIANKRSSSAEESGQDVLENTFSQKHKELSVLLLEMKEAQEEIAFLKLQLQGKRAEEADHEVLDQKEMKQMEGEGIAPIKMKVFLEDTGQDFPLMPNEESSLPAVEKEQASTEHQSRTSEEISLNDAGVELKSTKQDGDKSLSAVPDIGQCHQDELERLKSQILELELNFHKAQEIYEKNLDEKAKEISNLNQLIEEFKKNADNNSSAFTALSEERDQLLSQVKELSMVTELRAQVKQLEMNLAEAERQRRLDYESQTAHDNLLTEQIHSLSIEAKSKDVKIEVLQNELDDVQLQFSEQSTLIRSLQSQLQNKESEVLEGAERVRHISSKVEELSQALSQKELEITKMDQLLLEKKRDVETLQQTIEEKDQQVTEISFSMTEKMVQLNEEKFSLGVEIKTLKEQLNLLSRAEEAKKEQVEEDNEVSSGLKQNYDEMSPAGQISKEELQHEFDLLKKENEQRKRKLQAALINRKELLQRVSRLEEELANLKDESKKEIPLSETERGEVEEDKENKEYSEKCVTSKCQEIEIYLKQTISEKEVELQHIRKDLEEKLAAEEQFQALVKQMNQTLQDKTNQIDLLQAEISENQAIIQKLITSNTDASDGDSVALVKETVVISPPCTGSSEHWKPELEEKILALEKEKEQLQKKLQEALTSRKAILKKAQEKERHLREELKQQKDDYNRLQEQFDEQSKENENIGDQLRQLQIQVRESIDGKLPSTDQQESCSSTPGLEEPLFKATEQHHTQPVLESNLCPDWPSHSEDASALQGGTSVAQIKAQLKEIEAEKVELELKVSSTTSELTKKSEEVFQLQEQINKQGLEIESLKTVSHEAEVHAESLQQKLESSQLQIAGLEHLRELQPKLDELQKLISKKEEDVSYLSGQLSEKEAALTKIQTEIIEQEDLIKALHTQLEMQAKEHDERIKQLQVELCEMKQKPEEIGEESRAKQQIQRKLQAALISRKEALKENKSLQEELSLARGTIERLTKSLADVESQVSAQNKEKDTVLGRLALLQEERDKLITEMDRSLLENQSLSSSCESLKLALEGLTEDKEKLVKEIESLKSSKIAESTEWQEKHKELQKEYEILLQSYENVSNEAERIQHVVEAVRQEKQELYGKLRSTEANKKETEKQLQEAEQEMEEMKEKMRKFAKSKQQKILELEEENDRLRAEVHPAGDTAKECMETLLSSNASMKEELERVKMEYETLSKKFQSLMSEKDSLSEEVQDLKHQIEGNVSKQANLEATEKHDNQTNVTEEGTQSIPGETEEQDSLSMSTRPTCSESVPSAKSANPAVSKDFSSHDEINNYLQQIDQLKERIAGLEEEKQKNKEFSQTLENEKNTLLSQISTKDGELKMLQEEVTKMNLLNQQIQEELSRVTKLKETAEEEKDDLEERLMNQLAELNGSIGNYCQDVTDAQIKNELLESEMKNLKKCVSELEEEKQQLVKEKTKVESEIRKEYLEKIQGAQKEPGNKSHAKELQELLKEKQQEVKQLQKDCIRYQEKISALERTVKALEFVQTESQKDLEITKENLAQAVEHRKKAQAELASFKVLLDDTQSEAARVLADNLKLKKELQSNKESVKSQMKQKDEDLERRLEQAEEKHLKEKKNMQEKLDALRREKVHLEETIGEIQVTLNKKDKEVQQLQENLDSTVTQLAAFTKSMSSLQDDRDRVIDEAKKWERKFSDAIQSKEEEIRLKEDNCSVLKDQLRQMSIHMEELKINISRLEHDKQIWESKAQTEVQLQQKVCDTLQGENKELLSQLEETRHLYHSSQNELAKLESELKSLKDQLTDLSNSLEKCKEQKGNLEGIIRQQEADIQNSKFSYEQLETDLQASRELTSRLHEEINMKEQKIISLLSGKEEAIQVAIAELRQQHDKEIKELENLLSQEEEENIVLEEENKKAVDKTNQLMETLKTIKKENIQQKAQLDSFVKSMSSLQNDRDRIVGDYQQLEERHLSIILEKDQLIQEAAAENNKLKEEIRGLRSHMDDLNSENAKLDAELIQYREDLNQVITIKDSQQKQLLEVQLQQNKELENKYAKLEEKLKESEEANEDLRRSFNALQEEKQDLSKEIESLKVSISQLTRQVTALQEEGTLGLYHAQLKVKEEEVHRLSALFSSSQKRIAELEEELVCVQKEAAKKVGEIEDKLKKELKHLHHDAGIMRNETETAEERVAELARDLVEMEQKLLMVTKENKGLTAQIQSFGRSMSSLQNSRDHANEELDELKRKYDASLKELAQLKEQGLLNRERDALLSETAFSMNSTEENSLSHLEKLNQQLLSKDEQLLHLSSQLEDSYNQVQSFSKAMASLQNERDHLWNELEKFRKSEEGKQRSAAQPSTSPAEVQSLKKAMSSLQNDRDRLLKELKNLQQQYLQINQEITELHPLKAQLQEYQDKTKAFQIMQEELRQENLSWQHELHQLRMEKSSWEIHERRMKEQYLMAISDKDQQLSHLQNLIRELRSSSSQTQPLKVQYQRQASPETSASPDGSQNLVYETELLRTQLNDSLKEIHQKELRIQQLNSNFSQLLEEKNTLSIQLCDTSQSLRENQQHYGDLLNHCAVLEKQVQELQAGPLNIDVAPGAPQEKNGVHRKSDPEELREPQQSFSEAQQQLCNTRQEVNELRKLLEEERDQRVAAENALSVAEEQIRRLEHSEWDSSRTPIIGSCGTQEQALLIDLTSNSCRRTRSGVGWKRVLRSLCHSRTRVPLLAAIYFLMIHVLLILCFTGHL</sequence>
<reference key="1">
    <citation type="journal article" date="1994" name="J. Autoimmun.">
        <title>Macrogolgin -- a new 376 kD Golgi complex outer membrane protein as target of antibodies in patients with rheumatic diseases and HIV infections.</title>
        <authorList>
            <person name="Seelig H.P."/>
            <person name="Schranz P."/>
            <person name="Schroeter H."/>
            <person name="Wiemann C."/>
            <person name="Griffiths G."/>
            <person name="Renz M."/>
        </authorList>
    </citation>
    <scope>NUCLEOTIDE SEQUENCE [MRNA] (ISOFORM 1)</scope>
    <scope>VARIANT ASP-1765</scope>
</reference>
<reference key="2">
    <citation type="journal article" date="1994" name="Biochem. Biophys. Res. Commun.">
        <title>Molecular cloning and sequence analysis of a human 372-kDa protein localized in the Golgi complex.</title>
        <authorList>
            <person name="Sohda M."/>
            <person name="Misumi Y."/>
            <person name="Fujiwara T."/>
            <person name="Nishioka M."/>
            <person name="Ikehara Y."/>
        </authorList>
    </citation>
    <scope>NUCLEOTIDE SEQUENCE [MRNA] (ISOFORM 3)</scope>
</reference>
<reference key="3">
    <citation type="journal article" date="2008" name="DNA Res.">
        <title>Fine expression profiling of full-length transcripts using a size-unbiased cDNA library prepared with the vector-capping method.</title>
        <authorList>
            <person name="Oshikawa M."/>
            <person name="Sugai Y."/>
            <person name="Usami R."/>
            <person name="Ohtoko K."/>
            <person name="Toyama S."/>
            <person name="Kato S."/>
        </authorList>
    </citation>
    <scope>NUCLEOTIDE SEQUENCE [LARGE SCALE MRNA] (ISOFORM 2)</scope>
    <scope>VARIANTS SER-911; CYS-1212 AND ASP-1765</scope>
    <source>
        <tissue>Retinal pigment epithelium</tissue>
    </source>
</reference>
<reference key="4">
    <citation type="journal article" date="2011" name="Invest. Ophthalmol. Vis. Sci.">
        <title>Full-length transcriptome analysis of human retina-derived cell lines ARPE-19 and Y79 using the vector-capping method.</title>
        <authorList>
            <person name="Oshikawa M."/>
            <person name="Tsutsui C."/>
            <person name="Ikegami T."/>
            <person name="Fuchida Y."/>
            <person name="Matsubara M."/>
            <person name="Toyama S."/>
            <person name="Usami R."/>
            <person name="Ohtoko K."/>
            <person name="Kato S."/>
        </authorList>
    </citation>
    <scope>NUCLEOTIDE SEQUENCE [LARGE SCALE MRNA] (ISOFORM 4)</scope>
    <source>
        <tissue>Retinoblastoma</tissue>
    </source>
</reference>
<reference key="5">
    <citation type="journal article" date="2006" name="Nature">
        <title>The DNA sequence, annotation and analysis of human chromosome 3.</title>
        <authorList>
            <person name="Muzny D.M."/>
            <person name="Scherer S.E."/>
            <person name="Kaul R."/>
            <person name="Wang J."/>
            <person name="Yu J."/>
            <person name="Sudbrak R."/>
            <person name="Buhay C.J."/>
            <person name="Chen R."/>
            <person name="Cree A."/>
            <person name="Ding Y."/>
            <person name="Dugan-Rocha S."/>
            <person name="Gill R."/>
            <person name="Gunaratne P."/>
            <person name="Harris R.A."/>
            <person name="Hawes A.C."/>
            <person name="Hernandez J."/>
            <person name="Hodgson A.V."/>
            <person name="Hume J."/>
            <person name="Jackson A."/>
            <person name="Khan Z.M."/>
            <person name="Kovar-Smith C."/>
            <person name="Lewis L.R."/>
            <person name="Lozado R.J."/>
            <person name="Metzker M.L."/>
            <person name="Milosavljevic A."/>
            <person name="Miner G.R."/>
            <person name="Morgan M.B."/>
            <person name="Nazareth L.V."/>
            <person name="Scott G."/>
            <person name="Sodergren E."/>
            <person name="Song X.-Z."/>
            <person name="Steffen D."/>
            <person name="Wei S."/>
            <person name="Wheeler D.A."/>
            <person name="Wright M.W."/>
            <person name="Worley K.C."/>
            <person name="Yuan Y."/>
            <person name="Zhang Z."/>
            <person name="Adams C.Q."/>
            <person name="Ansari-Lari M.A."/>
            <person name="Ayele M."/>
            <person name="Brown M.J."/>
            <person name="Chen G."/>
            <person name="Chen Z."/>
            <person name="Clendenning J."/>
            <person name="Clerc-Blankenburg K.P."/>
            <person name="Chen R."/>
            <person name="Chen Z."/>
            <person name="Davis C."/>
            <person name="Delgado O."/>
            <person name="Dinh H.H."/>
            <person name="Dong W."/>
            <person name="Draper H."/>
            <person name="Ernst S."/>
            <person name="Fu G."/>
            <person name="Gonzalez-Garay M.L."/>
            <person name="Garcia D.K."/>
            <person name="Gillett W."/>
            <person name="Gu J."/>
            <person name="Hao B."/>
            <person name="Haugen E."/>
            <person name="Havlak P."/>
            <person name="He X."/>
            <person name="Hennig S."/>
            <person name="Hu S."/>
            <person name="Huang W."/>
            <person name="Jackson L.R."/>
            <person name="Jacob L.S."/>
            <person name="Kelly S.H."/>
            <person name="Kube M."/>
            <person name="Levy R."/>
            <person name="Li Z."/>
            <person name="Liu B."/>
            <person name="Liu J."/>
            <person name="Liu W."/>
            <person name="Lu J."/>
            <person name="Maheshwari M."/>
            <person name="Nguyen B.-V."/>
            <person name="Okwuonu G.O."/>
            <person name="Palmeiri A."/>
            <person name="Pasternak S."/>
            <person name="Perez L.M."/>
            <person name="Phelps K.A."/>
            <person name="Plopper F.J."/>
            <person name="Qiang B."/>
            <person name="Raymond C."/>
            <person name="Rodriguez R."/>
            <person name="Saenphimmachak C."/>
            <person name="Santibanez J."/>
            <person name="Shen H."/>
            <person name="Shen Y."/>
            <person name="Subramanian S."/>
            <person name="Tabor P.E."/>
            <person name="Verduzco D."/>
            <person name="Waldron L."/>
            <person name="Wang J."/>
            <person name="Wang J."/>
            <person name="Wang Q."/>
            <person name="Williams G.A."/>
            <person name="Wong G.K.-S."/>
            <person name="Yao Z."/>
            <person name="Zhang J."/>
            <person name="Zhang X."/>
            <person name="Zhao G."/>
            <person name="Zhou J."/>
            <person name="Zhou Y."/>
            <person name="Nelson D."/>
            <person name="Lehrach H."/>
            <person name="Reinhardt R."/>
            <person name="Naylor S.L."/>
            <person name="Yang H."/>
            <person name="Olson M."/>
            <person name="Weinstock G."/>
            <person name="Gibbs R.A."/>
        </authorList>
    </citation>
    <scope>NUCLEOTIDE SEQUENCE [LARGE SCALE GENOMIC DNA]</scope>
</reference>
<reference key="6">
    <citation type="submission" date="2005-09" db="EMBL/GenBank/DDBJ databases">
        <authorList>
            <person name="Mural R.J."/>
            <person name="Istrail S."/>
            <person name="Sutton G.G."/>
            <person name="Florea L."/>
            <person name="Halpern A.L."/>
            <person name="Mobarry C.M."/>
            <person name="Lippert R."/>
            <person name="Walenz B."/>
            <person name="Shatkay H."/>
            <person name="Dew I."/>
            <person name="Miller J.R."/>
            <person name="Flanigan M.J."/>
            <person name="Edwards N.J."/>
            <person name="Bolanos R."/>
            <person name="Fasulo D."/>
            <person name="Halldorsson B.V."/>
            <person name="Hannenhalli S."/>
            <person name="Turner R."/>
            <person name="Yooseph S."/>
            <person name="Lu F."/>
            <person name="Nusskern D.R."/>
            <person name="Shue B.C."/>
            <person name="Zheng X.H."/>
            <person name="Zhong F."/>
            <person name="Delcher A.L."/>
            <person name="Huson D.H."/>
            <person name="Kravitz S.A."/>
            <person name="Mouchard L."/>
            <person name="Reinert K."/>
            <person name="Remington K.A."/>
            <person name="Clark A.G."/>
            <person name="Waterman M.S."/>
            <person name="Eichler E.E."/>
            <person name="Adams M.D."/>
            <person name="Hunkapiller M.W."/>
            <person name="Myers E.W."/>
            <person name="Venter J.C."/>
        </authorList>
    </citation>
    <scope>NUCLEOTIDE SEQUENCE [LARGE SCALE GENOMIC DNA]</scope>
</reference>
<reference key="7">
    <citation type="journal article" date="1994" name="Mol. Cell. Biol.">
        <title>Molecular genetic analyses of a 376-kilodalton Golgi complex membrane protein (giantin).</title>
        <authorList>
            <person name="Seelig H.P."/>
            <person name="Schranz P."/>
            <person name="Schroeter H."/>
            <person name="Wiemann C."/>
            <person name="Griffiths G."/>
            <person name="Renz M."/>
        </authorList>
    </citation>
    <scope>RETRACTED PAPER</scope>
</reference>
<reference key="8">
    <citation type="journal article" date="1995" name="Mol. Cell. Biol.">
        <authorList>
            <person name="Seelig H.P."/>
            <person name="Schranz P."/>
            <person name="Schroeter H."/>
            <person name="Wiemann C."/>
            <person name="Griffiths G."/>
            <person name="Renz M."/>
        </authorList>
    </citation>
    <scope>RETRACTION NOTICE OF PUBMED:7511208</scope>
</reference>
<reference key="9">
    <citation type="journal article" date="2004" name="Exp. Cell Res.">
        <title>Polo-like kinase 3 is Golgi localized and involved in regulating Golgi fragmentation during the cell cycle.</title>
        <authorList>
            <person name="Ruan Q."/>
            <person name="Wang Q."/>
            <person name="Xie S."/>
            <person name="Fang Y."/>
            <person name="Darzynkiewicz Z."/>
            <person name="Guan K."/>
            <person name="Jhanwar-Uniyal M."/>
            <person name="Dai W."/>
        </authorList>
    </citation>
    <scope>INTERACTION WITH PLK3</scope>
</reference>
<reference key="10">
    <citation type="journal article" date="2008" name="Proc. Natl. Acad. Sci. U.S.A.">
        <title>A quantitative atlas of mitotic phosphorylation.</title>
        <authorList>
            <person name="Dephoure N."/>
            <person name="Zhou C."/>
            <person name="Villen J."/>
            <person name="Beausoleil S.A."/>
            <person name="Bakalarski C.E."/>
            <person name="Elledge S.J."/>
            <person name="Gygi S.P."/>
        </authorList>
    </citation>
    <scope>PHOSPHORYLATION [LARGE SCALE ANALYSIS] AT SER-17</scope>
    <scope>IDENTIFICATION BY MASS SPECTROMETRY [LARGE SCALE ANALYSIS]</scope>
    <source>
        <tissue>Cervix carcinoma</tissue>
    </source>
</reference>
<reference key="11">
    <citation type="journal article" date="2009" name="Anal. Chem.">
        <title>Lys-N and trypsin cover complementary parts of the phosphoproteome in a refined SCX-based approach.</title>
        <authorList>
            <person name="Gauci S."/>
            <person name="Helbig A.O."/>
            <person name="Slijper M."/>
            <person name="Krijgsveld J."/>
            <person name="Heck A.J."/>
            <person name="Mohammed S."/>
        </authorList>
    </citation>
    <scope>IDENTIFICATION BY MASS SPECTROMETRY [LARGE SCALE ANALYSIS]</scope>
</reference>
<reference key="12">
    <citation type="journal article" date="2009" name="Sci. Signal.">
        <title>Quantitative phosphoproteomic analysis of T cell receptor signaling reveals system-wide modulation of protein-protein interactions.</title>
        <authorList>
            <person name="Mayya V."/>
            <person name="Lundgren D.H."/>
            <person name="Hwang S.-I."/>
            <person name="Rezaul K."/>
            <person name="Wu L."/>
            <person name="Eng J.K."/>
            <person name="Rodionov V."/>
            <person name="Han D.K."/>
        </authorList>
    </citation>
    <scope>PHOSPHORYLATION [LARGE SCALE ANALYSIS] AT SER-6 AND SER-17</scope>
    <scope>IDENTIFICATION BY MASS SPECTROMETRY [LARGE SCALE ANALYSIS]</scope>
    <source>
        <tissue>Leukemic T-cell</tissue>
    </source>
</reference>
<reference key="13">
    <citation type="journal article" date="2010" name="Sci. Signal.">
        <title>Quantitative phosphoproteomics reveals widespread full phosphorylation site occupancy during mitosis.</title>
        <authorList>
            <person name="Olsen J.V."/>
            <person name="Vermeulen M."/>
            <person name="Santamaria A."/>
            <person name="Kumar C."/>
            <person name="Miller M.L."/>
            <person name="Jensen L.J."/>
            <person name="Gnad F."/>
            <person name="Cox J."/>
            <person name="Jensen T.S."/>
            <person name="Nigg E.A."/>
            <person name="Brunak S."/>
            <person name="Mann M."/>
        </authorList>
    </citation>
    <scope>PHOSPHORYLATION [LARGE SCALE ANALYSIS] AT SER-17 AND SER-138</scope>
    <scope>IDENTIFICATION BY MASS SPECTROMETRY [LARGE SCALE ANALYSIS]</scope>
    <source>
        <tissue>Cervix carcinoma</tissue>
    </source>
</reference>
<reference key="14">
    <citation type="journal article" date="2011" name="BMC Syst. Biol.">
        <title>Initial characterization of the human central proteome.</title>
        <authorList>
            <person name="Burkard T.R."/>
            <person name="Planyavsky M."/>
            <person name="Kaupe I."/>
            <person name="Breitwieser F.P."/>
            <person name="Buerckstuemmer T."/>
            <person name="Bennett K.L."/>
            <person name="Superti-Furga G."/>
            <person name="Colinge J."/>
        </authorList>
    </citation>
    <scope>IDENTIFICATION BY MASS SPECTROMETRY [LARGE SCALE ANALYSIS]</scope>
</reference>
<reference key="15">
    <citation type="journal article" date="2012" name="Proc. Natl. Acad. Sci. U.S.A.">
        <title>N-terminal acetylome analyses and functional insights of the N-terminal acetyltransferase NatB.</title>
        <authorList>
            <person name="Van Damme P."/>
            <person name="Lasa M."/>
            <person name="Polevoda B."/>
            <person name="Gazquez C."/>
            <person name="Elosegui-Artola A."/>
            <person name="Kim D.S."/>
            <person name="De Juan-Pardo E."/>
            <person name="Demeyer K."/>
            <person name="Hole K."/>
            <person name="Larrea E."/>
            <person name="Timmerman E."/>
            <person name="Prieto J."/>
            <person name="Arnesen T."/>
            <person name="Sherman F."/>
            <person name="Gevaert K."/>
            <person name="Aldabe R."/>
        </authorList>
    </citation>
    <scope>ACETYLATION [LARGE SCALE ANALYSIS] AT MET-1 (ISOFORMS 3 AND 4)</scope>
    <scope>IDENTIFICATION BY MASS SPECTROMETRY [LARGE SCALE ANALYSIS]</scope>
</reference>
<reference key="16">
    <citation type="journal article" date="2013" name="J. Proteome Res.">
        <title>Toward a comprehensive characterization of a human cancer cell phosphoproteome.</title>
        <authorList>
            <person name="Zhou H."/>
            <person name="Di Palma S."/>
            <person name="Preisinger C."/>
            <person name="Peng M."/>
            <person name="Polat A.N."/>
            <person name="Heck A.J."/>
            <person name="Mohammed S."/>
        </authorList>
    </citation>
    <scope>PHOSPHORYLATION [LARGE SCALE ANALYSIS] AT SER-2872 AND SER-3037</scope>
    <scope>IDENTIFICATION BY MASS SPECTROMETRY [LARGE SCALE ANALYSIS]</scope>
    <source>
        <tissue>Cervix carcinoma</tissue>
        <tissue>Erythroleukemia</tissue>
    </source>
</reference>
<reference key="17">
    <citation type="journal article" date="2014" name="J. Proteomics">
        <title>An enzyme assisted RP-RPLC approach for in-depth analysis of human liver phosphoproteome.</title>
        <authorList>
            <person name="Bian Y."/>
            <person name="Song C."/>
            <person name="Cheng K."/>
            <person name="Dong M."/>
            <person name="Wang F."/>
            <person name="Huang J."/>
            <person name="Sun D."/>
            <person name="Wang L."/>
            <person name="Ye M."/>
            <person name="Zou H."/>
        </authorList>
    </citation>
    <scope>PHOSPHORYLATION [LARGE SCALE ANALYSIS] AT SER-6; SER-528; SER-653; SER-2216; SER-2735 AND SER-2884</scope>
    <scope>IDENTIFICATION BY MASS SPECTROMETRY [LARGE SCALE ANALYSIS]</scope>
    <source>
        <tissue>Liver</tissue>
    </source>
</reference>
<reference key="18">
    <citation type="journal article" date="2006" name="Science">
        <title>The consensus coding sequences of human breast and colorectal cancers.</title>
        <authorList>
            <person name="Sjoeblom T."/>
            <person name="Jones S."/>
            <person name="Wood L.D."/>
            <person name="Parsons D.W."/>
            <person name="Lin J."/>
            <person name="Barber T.D."/>
            <person name="Mandelker D."/>
            <person name="Leary R.J."/>
            <person name="Ptak J."/>
            <person name="Silliman N."/>
            <person name="Szabo S."/>
            <person name="Buckhaults P."/>
            <person name="Farrell C."/>
            <person name="Meeh P."/>
            <person name="Markowitz S.D."/>
            <person name="Willis J."/>
            <person name="Dawson D."/>
            <person name="Willson J.K.V."/>
            <person name="Gazdar A.F."/>
            <person name="Hartigan J."/>
            <person name="Wu L."/>
            <person name="Liu C."/>
            <person name="Parmigiani G."/>
            <person name="Park B.H."/>
            <person name="Bachman K.E."/>
            <person name="Papadopoulos N."/>
            <person name="Vogelstein B."/>
            <person name="Kinzler K.W."/>
            <person name="Velculescu V.E."/>
        </authorList>
    </citation>
    <scope>VARIANTS [LARGE SCALE ANALYSIS] HIS-348 AND GLY-944</scope>
</reference>